<accession>A7TKW8</accession>
<reference key="1">
    <citation type="journal article" date="2007" name="Proc. Natl. Acad. Sci. U.S.A.">
        <title>Independent sorting-out of thousands of duplicated gene pairs in two yeast species descended from a whole-genome duplication.</title>
        <authorList>
            <person name="Scannell D.R."/>
            <person name="Frank A.C."/>
            <person name="Conant G.C."/>
            <person name="Byrne K.P."/>
            <person name="Woolfit M."/>
            <person name="Wolfe K.H."/>
        </authorList>
    </citation>
    <scope>NUCLEOTIDE SEQUENCE [LARGE SCALE GENOMIC DNA]</scope>
    <source>
        <strain>ATCC 22028 / DSM 70294 / BCRC 21397 / CBS 2163 / NBRC 10782 / NRRL Y-8283 / UCD 57-17</strain>
    </source>
</reference>
<gene>
    <name evidence="1" type="primary">GET1</name>
    <name type="ORF">Kpol_1025p44</name>
</gene>
<keyword id="KW-0175">Coiled coil</keyword>
<keyword id="KW-0256">Endoplasmic reticulum</keyword>
<keyword id="KW-0931">ER-Golgi transport</keyword>
<keyword id="KW-0333">Golgi apparatus</keyword>
<keyword id="KW-0472">Membrane</keyword>
<keyword id="KW-1185">Reference proteome</keyword>
<keyword id="KW-0812">Transmembrane</keyword>
<keyword id="KW-1133">Transmembrane helix</keyword>
<keyword id="KW-0813">Transport</keyword>
<proteinExistence type="inferred from homology"/>
<comment type="function">
    <text evidence="1">Required for the post-translational delivery of tail-anchored (TA) proteins to the endoplasmic reticulum. Together with GET2, acts as a membrane receptor for soluble GET3, which recognizes and selectively binds the transmembrane domain of TA proteins in the cytosol. The GET complex cooperates with the HDEL receptor ERD2 to mediate the ATP-dependent retrieval of resident ER proteins that contain a C-terminal H-D-E-L retention signal from the Golgi to the ER.</text>
</comment>
<comment type="subunit">
    <text evidence="1">Component of the Golgi to ER traffic (GET) complex, which is composed of GET1, GET2 and GET3. Within the complex, GET1 and GET2 form a heterotetramer which is stabilized by phosphatidylinositol binding and which binds to the GET3 homodimer.</text>
</comment>
<comment type="subcellular location">
    <subcellularLocation>
        <location evidence="1">Endoplasmic reticulum membrane</location>
        <topology evidence="1">Multi-pass membrane protein</topology>
    </subcellularLocation>
    <subcellularLocation>
        <location evidence="1">Golgi apparatus membrane</location>
        <topology evidence="1">Multi-pass membrane protein</topology>
    </subcellularLocation>
</comment>
<comment type="similarity">
    <text evidence="1">Belongs to the WRB/GET1 family.</text>
</comment>
<sequence>MNWVIIAALFFVIINKLLQYTSRYQEAWINKFSISSDISSLSKEYSKLSAERLKIKEENQSISAQDNYARWTKNNRKLTKLEGELEKLRSNLKIAKDSQSKLFNRLKLLTLTLPFMILKLWKGKFIVYDIPTKDTFPVIVNGVLSQGLLYIPLLPINFLRGIDPNKHILVPGVSLGIWLMALTKTIDTVEFIVKQLVFQPVVSKQVKEKTKEKVVELKTTEAELD</sequence>
<dbReference type="EMBL" id="DS480410">
    <property type="protein sequence ID" value="EDO17123.1"/>
    <property type="molecule type" value="Genomic_DNA"/>
</dbReference>
<dbReference type="RefSeq" id="XP_001644981.1">
    <property type="nucleotide sequence ID" value="XM_001644931.1"/>
</dbReference>
<dbReference type="SMR" id="A7TKW8"/>
<dbReference type="FunCoup" id="A7TKW8">
    <property type="interactions" value="48"/>
</dbReference>
<dbReference type="STRING" id="436907.A7TKW8"/>
<dbReference type="GeneID" id="5545318"/>
<dbReference type="KEGG" id="vpo:Kpol_1025p44"/>
<dbReference type="eggNOG" id="KOG4253">
    <property type="taxonomic scope" value="Eukaryota"/>
</dbReference>
<dbReference type="HOGENOM" id="CLU_089418_2_1_1"/>
<dbReference type="InParanoid" id="A7TKW8"/>
<dbReference type="OMA" id="AQDNYAR"/>
<dbReference type="OrthoDB" id="69461at2759"/>
<dbReference type="PhylomeDB" id="A7TKW8"/>
<dbReference type="Proteomes" id="UP000000267">
    <property type="component" value="Unassembled WGS sequence"/>
</dbReference>
<dbReference type="GO" id="GO:0005789">
    <property type="term" value="C:endoplasmic reticulum membrane"/>
    <property type="evidence" value="ECO:0007669"/>
    <property type="project" value="UniProtKB-SubCell"/>
</dbReference>
<dbReference type="GO" id="GO:0043529">
    <property type="term" value="C:GET complex"/>
    <property type="evidence" value="ECO:0007669"/>
    <property type="project" value="UniProtKB-UniRule"/>
</dbReference>
<dbReference type="GO" id="GO:0000139">
    <property type="term" value="C:Golgi membrane"/>
    <property type="evidence" value="ECO:0007669"/>
    <property type="project" value="UniProtKB-SubCell"/>
</dbReference>
<dbReference type="GO" id="GO:0032977">
    <property type="term" value="F:membrane insertase activity"/>
    <property type="evidence" value="ECO:0007669"/>
    <property type="project" value="EnsemblFungi"/>
</dbReference>
<dbReference type="GO" id="GO:0008320">
    <property type="term" value="F:protein transmembrane transporter activity"/>
    <property type="evidence" value="ECO:0007669"/>
    <property type="project" value="EnsemblFungi"/>
</dbReference>
<dbReference type="GO" id="GO:0043495">
    <property type="term" value="F:protein-membrane adaptor activity"/>
    <property type="evidence" value="ECO:0007669"/>
    <property type="project" value="EnsemblFungi"/>
</dbReference>
<dbReference type="GO" id="GO:0097051">
    <property type="term" value="P:establishment of protein localization to endoplasmic reticulum membrane"/>
    <property type="evidence" value="ECO:0007669"/>
    <property type="project" value="EnsemblFungi"/>
</dbReference>
<dbReference type="GO" id="GO:0000423">
    <property type="term" value="P:mitophagy"/>
    <property type="evidence" value="ECO:0007669"/>
    <property type="project" value="EnsemblFungi"/>
</dbReference>
<dbReference type="GO" id="GO:0006890">
    <property type="term" value="P:retrograde vesicle-mediated transport, Golgi to endoplasmic reticulum"/>
    <property type="evidence" value="ECO:0007669"/>
    <property type="project" value="EnsemblFungi"/>
</dbReference>
<dbReference type="GO" id="GO:0071816">
    <property type="term" value="P:tail-anchored membrane protein insertion into ER membrane"/>
    <property type="evidence" value="ECO:0007669"/>
    <property type="project" value="EnsemblFungi"/>
</dbReference>
<dbReference type="Gene3D" id="1.10.287.660">
    <property type="entry name" value="Helix hairpin bin"/>
    <property type="match status" value="1"/>
</dbReference>
<dbReference type="HAMAP" id="MF_03113">
    <property type="entry name" value="Get1"/>
    <property type="match status" value="1"/>
</dbReference>
<dbReference type="InterPro" id="IPR028945">
    <property type="entry name" value="Get1"/>
</dbReference>
<dbReference type="InterPro" id="IPR027538">
    <property type="entry name" value="Get1_fungi"/>
</dbReference>
<dbReference type="InterPro" id="IPR029012">
    <property type="entry name" value="Helix_hairpin_bin_sf"/>
</dbReference>
<dbReference type="PANTHER" id="PTHR42650:SF1">
    <property type="entry name" value="GUIDED ENTRY OF TAIL-ANCHORED PROTEINS FACTOR 1"/>
    <property type="match status" value="1"/>
</dbReference>
<dbReference type="PANTHER" id="PTHR42650">
    <property type="entry name" value="TAIL-ANCHORED PROTEIN INSERTION RECEPTOR WRB"/>
    <property type="match status" value="1"/>
</dbReference>
<dbReference type="Pfam" id="PF04420">
    <property type="entry name" value="CHD5"/>
    <property type="match status" value="1"/>
</dbReference>
<protein>
    <recommendedName>
        <fullName evidence="1">Golgi to ER traffic protein 1</fullName>
    </recommendedName>
    <alternativeName>
        <fullName evidence="1">Guided entry of tail-anchored proteins 1</fullName>
    </alternativeName>
</protein>
<feature type="chain" id="PRO_0000388621" description="Golgi to ER traffic protein 1">
    <location>
        <begin position="1"/>
        <end position="225"/>
    </location>
</feature>
<feature type="topological domain" description="Lumenal" evidence="1">
    <location>
        <position position="1"/>
    </location>
</feature>
<feature type="transmembrane region" description="Helical" evidence="1">
    <location>
        <begin position="2"/>
        <end position="21"/>
    </location>
</feature>
<feature type="topological domain" description="Cytoplasmic" evidence="1">
    <location>
        <begin position="22"/>
        <end position="107"/>
    </location>
</feature>
<feature type="transmembrane region" description="Helical" evidence="1">
    <location>
        <begin position="108"/>
        <end position="128"/>
    </location>
</feature>
<feature type="topological domain" description="Lumenal" evidence="1">
    <location>
        <begin position="129"/>
        <end position="172"/>
    </location>
</feature>
<feature type="transmembrane region" description="Helical" evidence="1">
    <location>
        <begin position="173"/>
        <end position="189"/>
    </location>
</feature>
<feature type="topological domain" description="Cytoplasmic" evidence="1">
    <location>
        <begin position="190"/>
        <end position="225"/>
    </location>
</feature>
<feature type="coiled-coil region" evidence="1">
    <location>
        <begin position="37"/>
        <end position="104"/>
    </location>
</feature>
<organism>
    <name type="scientific">Vanderwaltozyma polyspora (strain ATCC 22028 / DSM 70294 / BCRC 21397 / CBS 2163 / NBRC 10782 / NRRL Y-8283 / UCD 57-17)</name>
    <name type="common">Kluyveromyces polysporus</name>
    <dbReference type="NCBI Taxonomy" id="436907"/>
    <lineage>
        <taxon>Eukaryota</taxon>
        <taxon>Fungi</taxon>
        <taxon>Dikarya</taxon>
        <taxon>Ascomycota</taxon>
        <taxon>Saccharomycotina</taxon>
        <taxon>Saccharomycetes</taxon>
        <taxon>Saccharomycetales</taxon>
        <taxon>Saccharomycetaceae</taxon>
        <taxon>Vanderwaltozyma</taxon>
    </lineage>
</organism>
<name>GET1_VANPO</name>
<evidence type="ECO:0000255" key="1">
    <source>
        <dbReference type="HAMAP-Rule" id="MF_03113"/>
    </source>
</evidence>